<feature type="chain" id="PRO_0000060003" description="Dipeptide transport system permease protein DppB">
    <location>
        <begin position="1"/>
        <end position="308"/>
    </location>
</feature>
<feature type="transmembrane region" description="Helical" evidence="1">
    <location>
        <begin position="10"/>
        <end position="30"/>
    </location>
</feature>
<feature type="transmembrane region" description="Helical" evidence="1">
    <location>
        <begin position="59"/>
        <end position="79"/>
    </location>
</feature>
<feature type="transmembrane region" description="Helical" evidence="1">
    <location>
        <begin position="100"/>
        <end position="120"/>
    </location>
</feature>
<feature type="transmembrane region" description="Helical" evidence="1">
    <location>
        <begin position="131"/>
        <end position="151"/>
    </location>
</feature>
<feature type="transmembrane region" description="Helical" evidence="1">
    <location>
        <begin position="168"/>
        <end position="188"/>
    </location>
</feature>
<feature type="transmembrane region" description="Helical" evidence="1">
    <location>
        <begin position="228"/>
        <end position="248"/>
    </location>
</feature>
<feature type="transmembrane region" description="Helical" evidence="1">
    <location>
        <begin position="278"/>
        <end position="298"/>
    </location>
</feature>
<feature type="domain" description="ABC transmembrane type-1" evidence="1">
    <location>
        <begin position="94"/>
        <end position="295"/>
    </location>
</feature>
<protein>
    <recommendedName>
        <fullName>Dipeptide transport system permease protein DppB</fullName>
    </recommendedName>
</protein>
<reference key="1">
    <citation type="journal article" date="1991" name="Mol. Microbiol.">
        <title>A Bacillus subtilis dipeptide transport system expressed early during sporulation.</title>
        <authorList>
            <person name="Mathiopoulos C."/>
            <person name="Mueller J.P."/>
            <person name="Slack F.J."/>
            <person name="Murphy C.G."/>
            <person name="Patankar S."/>
            <person name="Bukusoglu G."/>
            <person name="Sonenshein A.L."/>
        </authorList>
    </citation>
    <scope>NUCLEOTIDE SEQUENCE [GENOMIC DNA]</scope>
    <scope>FUNCTION</scope>
    <source>
        <strain>168</strain>
    </source>
</reference>
<reference key="2">
    <citation type="submission" date="1997-11" db="EMBL/GenBank/DDBJ databases">
        <title>Sequence of the Bacillus subtilis genome between xlyA and ykoR.</title>
        <authorList>
            <person name="Devine K.M."/>
        </authorList>
    </citation>
    <scope>NUCLEOTIDE SEQUENCE [GENOMIC DNA]</scope>
    <source>
        <strain>168</strain>
    </source>
</reference>
<reference key="3">
    <citation type="journal article" date="1997" name="Nature">
        <title>The complete genome sequence of the Gram-positive bacterium Bacillus subtilis.</title>
        <authorList>
            <person name="Kunst F."/>
            <person name="Ogasawara N."/>
            <person name="Moszer I."/>
            <person name="Albertini A.M."/>
            <person name="Alloni G."/>
            <person name="Azevedo V."/>
            <person name="Bertero M.G."/>
            <person name="Bessieres P."/>
            <person name="Bolotin A."/>
            <person name="Borchert S."/>
            <person name="Borriss R."/>
            <person name="Boursier L."/>
            <person name="Brans A."/>
            <person name="Braun M."/>
            <person name="Brignell S.C."/>
            <person name="Bron S."/>
            <person name="Brouillet S."/>
            <person name="Bruschi C.V."/>
            <person name="Caldwell B."/>
            <person name="Capuano V."/>
            <person name="Carter N.M."/>
            <person name="Choi S.-K."/>
            <person name="Codani J.-J."/>
            <person name="Connerton I.F."/>
            <person name="Cummings N.J."/>
            <person name="Daniel R.A."/>
            <person name="Denizot F."/>
            <person name="Devine K.M."/>
            <person name="Duesterhoeft A."/>
            <person name="Ehrlich S.D."/>
            <person name="Emmerson P.T."/>
            <person name="Entian K.-D."/>
            <person name="Errington J."/>
            <person name="Fabret C."/>
            <person name="Ferrari E."/>
            <person name="Foulger D."/>
            <person name="Fritz C."/>
            <person name="Fujita M."/>
            <person name="Fujita Y."/>
            <person name="Fuma S."/>
            <person name="Galizzi A."/>
            <person name="Galleron N."/>
            <person name="Ghim S.-Y."/>
            <person name="Glaser P."/>
            <person name="Goffeau A."/>
            <person name="Golightly E.J."/>
            <person name="Grandi G."/>
            <person name="Guiseppi G."/>
            <person name="Guy B.J."/>
            <person name="Haga K."/>
            <person name="Haiech J."/>
            <person name="Harwood C.R."/>
            <person name="Henaut A."/>
            <person name="Hilbert H."/>
            <person name="Holsappel S."/>
            <person name="Hosono S."/>
            <person name="Hullo M.-F."/>
            <person name="Itaya M."/>
            <person name="Jones L.-M."/>
            <person name="Joris B."/>
            <person name="Karamata D."/>
            <person name="Kasahara Y."/>
            <person name="Klaerr-Blanchard M."/>
            <person name="Klein C."/>
            <person name="Kobayashi Y."/>
            <person name="Koetter P."/>
            <person name="Koningstein G."/>
            <person name="Krogh S."/>
            <person name="Kumano M."/>
            <person name="Kurita K."/>
            <person name="Lapidus A."/>
            <person name="Lardinois S."/>
            <person name="Lauber J."/>
            <person name="Lazarevic V."/>
            <person name="Lee S.-M."/>
            <person name="Levine A."/>
            <person name="Liu H."/>
            <person name="Masuda S."/>
            <person name="Mauel C."/>
            <person name="Medigue C."/>
            <person name="Medina N."/>
            <person name="Mellado R.P."/>
            <person name="Mizuno M."/>
            <person name="Moestl D."/>
            <person name="Nakai S."/>
            <person name="Noback M."/>
            <person name="Noone D."/>
            <person name="O'Reilly M."/>
            <person name="Ogawa K."/>
            <person name="Ogiwara A."/>
            <person name="Oudega B."/>
            <person name="Park S.-H."/>
            <person name="Parro V."/>
            <person name="Pohl T.M."/>
            <person name="Portetelle D."/>
            <person name="Porwollik S."/>
            <person name="Prescott A.M."/>
            <person name="Presecan E."/>
            <person name="Pujic P."/>
            <person name="Purnelle B."/>
            <person name="Rapoport G."/>
            <person name="Rey M."/>
            <person name="Reynolds S."/>
            <person name="Rieger M."/>
            <person name="Rivolta C."/>
            <person name="Rocha E."/>
            <person name="Roche B."/>
            <person name="Rose M."/>
            <person name="Sadaie Y."/>
            <person name="Sato T."/>
            <person name="Scanlan E."/>
            <person name="Schleich S."/>
            <person name="Schroeter R."/>
            <person name="Scoffone F."/>
            <person name="Sekiguchi J."/>
            <person name="Sekowska A."/>
            <person name="Seror S.J."/>
            <person name="Serror P."/>
            <person name="Shin B.-S."/>
            <person name="Soldo B."/>
            <person name="Sorokin A."/>
            <person name="Tacconi E."/>
            <person name="Takagi T."/>
            <person name="Takahashi H."/>
            <person name="Takemaru K."/>
            <person name="Takeuchi M."/>
            <person name="Tamakoshi A."/>
            <person name="Tanaka T."/>
            <person name="Terpstra P."/>
            <person name="Tognoni A."/>
            <person name="Tosato V."/>
            <person name="Uchiyama S."/>
            <person name="Vandenbol M."/>
            <person name="Vannier F."/>
            <person name="Vassarotti A."/>
            <person name="Viari A."/>
            <person name="Wambutt R."/>
            <person name="Wedler E."/>
            <person name="Wedler H."/>
            <person name="Weitzenegger T."/>
            <person name="Winters P."/>
            <person name="Wipat A."/>
            <person name="Yamamoto H."/>
            <person name="Yamane K."/>
            <person name="Yasumoto K."/>
            <person name="Yata K."/>
            <person name="Yoshida K."/>
            <person name="Yoshikawa H.-F."/>
            <person name="Zumstein E."/>
            <person name="Yoshikawa H."/>
            <person name="Danchin A."/>
        </authorList>
    </citation>
    <scope>NUCLEOTIDE SEQUENCE [LARGE SCALE GENOMIC DNA]</scope>
    <source>
        <strain>168</strain>
    </source>
</reference>
<name>DPPB_BACSU</name>
<evidence type="ECO:0000255" key="1">
    <source>
        <dbReference type="PROSITE-ProRule" id="PRU00441"/>
    </source>
</evidence>
<evidence type="ECO:0000305" key="2"/>
<evidence type="ECO:0000305" key="3">
    <source>
    </source>
</evidence>
<keyword id="KW-1003">Cell membrane</keyword>
<keyword id="KW-0472">Membrane</keyword>
<keyword id="KW-0571">Peptide transport</keyword>
<keyword id="KW-0653">Protein transport</keyword>
<keyword id="KW-1185">Reference proteome</keyword>
<keyword id="KW-0749">Sporulation</keyword>
<keyword id="KW-0812">Transmembrane</keyword>
<keyword id="KW-1133">Transmembrane helix</keyword>
<keyword id="KW-0813">Transport</keyword>
<gene>
    <name type="primary">dppB</name>
    <name type="synonym">dciAB</name>
    <name type="ordered locus">BSU12930</name>
</gene>
<dbReference type="EMBL" id="X56678">
    <property type="protein sequence ID" value="CAA40003.1"/>
    <property type="molecule type" value="Genomic_DNA"/>
</dbReference>
<dbReference type="EMBL" id="AJ002571">
    <property type="protein sequence ID" value="CAA05573.1"/>
    <property type="molecule type" value="Genomic_DNA"/>
</dbReference>
<dbReference type="EMBL" id="AL009126">
    <property type="protein sequence ID" value="CAB13150.1"/>
    <property type="molecule type" value="Genomic_DNA"/>
</dbReference>
<dbReference type="PIR" id="S16648">
    <property type="entry name" value="S16648"/>
</dbReference>
<dbReference type="RefSeq" id="NP_389176.1">
    <property type="nucleotide sequence ID" value="NC_000964.3"/>
</dbReference>
<dbReference type="RefSeq" id="WP_003245446.1">
    <property type="nucleotide sequence ID" value="NZ_OZ025638.1"/>
</dbReference>
<dbReference type="SMR" id="P26903"/>
<dbReference type="FunCoup" id="P26903">
    <property type="interactions" value="280"/>
</dbReference>
<dbReference type="STRING" id="224308.BSU12930"/>
<dbReference type="TCDB" id="3.A.1.5.2">
    <property type="family name" value="the atp-binding cassette (abc) superfamily"/>
</dbReference>
<dbReference type="PaxDb" id="224308-BSU12930"/>
<dbReference type="EnsemblBacteria" id="CAB13150">
    <property type="protein sequence ID" value="CAB13150"/>
    <property type="gene ID" value="BSU_12930"/>
</dbReference>
<dbReference type="GeneID" id="939881"/>
<dbReference type="KEGG" id="bsu:BSU12930"/>
<dbReference type="PATRIC" id="fig|224308.179.peg.1405"/>
<dbReference type="eggNOG" id="COG0601">
    <property type="taxonomic scope" value="Bacteria"/>
</dbReference>
<dbReference type="InParanoid" id="P26903"/>
<dbReference type="OrthoDB" id="9773683at2"/>
<dbReference type="PhylomeDB" id="P26903"/>
<dbReference type="BioCyc" id="BSUB:BSU12930-MONOMER"/>
<dbReference type="Proteomes" id="UP000001570">
    <property type="component" value="Chromosome"/>
</dbReference>
<dbReference type="GO" id="GO:0005886">
    <property type="term" value="C:plasma membrane"/>
    <property type="evidence" value="ECO:0000318"/>
    <property type="project" value="GO_Central"/>
</dbReference>
<dbReference type="GO" id="GO:0015640">
    <property type="term" value="F:peptidoglycan peptide transmembrane transporter activity"/>
    <property type="evidence" value="ECO:0000318"/>
    <property type="project" value="GO_Central"/>
</dbReference>
<dbReference type="GO" id="GO:0015031">
    <property type="term" value="P:protein transport"/>
    <property type="evidence" value="ECO:0007669"/>
    <property type="project" value="UniProtKB-KW"/>
</dbReference>
<dbReference type="GO" id="GO:0030435">
    <property type="term" value="P:sporulation resulting in formation of a cellular spore"/>
    <property type="evidence" value="ECO:0007669"/>
    <property type="project" value="UniProtKB-KW"/>
</dbReference>
<dbReference type="CDD" id="cd06261">
    <property type="entry name" value="TM_PBP2"/>
    <property type="match status" value="1"/>
</dbReference>
<dbReference type="Gene3D" id="1.10.3720.10">
    <property type="entry name" value="MetI-like"/>
    <property type="match status" value="1"/>
</dbReference>
<dbReference type="InterPro" id="IPR045621">
    <property type="entry name" value="BPD_transp_1_N"/>
</dbReference>
<dbReference type="InterPro" id="IPR000515">
    <property type="entry name" value="MetI-like"/>
</dbReference>
<dbReference type="InterPro" id="IPR035906">
    <property type="entry name" value="MetI-like_sf"/>
</dbReference>
<dbReference type="PANTHER" id="PTHR43163">
    <property type="entry name" value="DIPEPTIDE TRANSPORT SYSTEM PERMEASE PROTEIN DPPB-RELATED"/>
    <property type="match status" value="1"/>
</dbReference>
<dbReference type="PANTHER" id="PTHR43163:SF6">
    <property type="entry name" value="DIPEPTIDE TRANSPORT SYSTEM PERMEASE PROTEIN DPPB-RELATED"/>
    <property type="match status" value="1"/>
</dbReference>
<dbReference type="Pfam" id="PF00528">
    <property type="entry name" value="BPD_transp_1"/>
    <property type="match status" value="1"/>
</dbReference>
<dbReference type="Pfam" id="PF19300">
    <property type="entry name" value="BPD_transp_1_N"/>
    <property type="match status" value="1"/>
</dbReference>
<dbReference type="SUPFAM" id="SSF161098">
    <property type="entry name" value="MetI-like"/>
    <property type="match status" value="1"/>
</dbReference>
<dbReference type="PROSITE" id="PS50928">
    <property type="entry name" value="ABC_TM1"/>
    <property type="match status" value="1"/>
</dbReference>
<comment type="function">
    <text evidence="2 3">Probably part of the ABC transporter DppBCDE involved in dipeptide transport (Probable). Responsible for the translocation of the substrate across the membrane (Probable).</text>
</comment>
<comment type="subcellular location">
    <subcellularLocation>
        <location evidence="2">Cell membrane</location>
        <topology evidence="1">Multi-pass membrane protein</topology>
    </subcellularLocation>
</comment>
<comment type="developmental stage">
    <text>Expressed early during sporulation.</text>
</comment>
<comment type="induction">
    <text>Nutrient deficiency conditions, which also induce sporulation.</text>
</comment>
<comment type="similarity">
    <text evidence="2">Belongs to the binding-protein-dependent transport system permease family. OppBC subfamily.</text>
</comment>
<organism>
    <name type="scientific">Bacillus subtilis (strain 168)</name>
    <dbReference type="NCBI Taxonomy" id="224308"/>
    <lineage>
        <taxon>Bacteria</taxon>
        <taxon>Bacillati</taxon>
        <taxon>Bacillota</taxon>
        <taxon>Bacilli</taxon>
        <taxon>Bacillales</taxon>
        <taxon>Bacillaceae</taxon>
        <taxon>Bacillus</taxon>
    </lineage>
</organism>
<accession>P26903</accession>
<proteinExistence type="evidence at transcript level"/>
<sequence length="308" mass="34056">MARYMIKRFWAMAATILVITTLTFVLMKVIPGSPFNEERGTNEAVQKNLEAYYHLDDPLIFQYIFYLKSIITFDFGPSIKKPSDSVNDMLERGFPVSFELGMTAIVIAVISGLVLGVIAALRRNGFLDYAAMSLAVLGISIPNFILATLLIQQFAVNLKLFPAATWTSPIHMVLPTAALAVGPMAIIARLTRSSMVEVLTQDYIRTAKAKGLSPFKIIVKHALRNALMPVITVLGTLVASILTGSFVIEKIFAIPGMGKYFVESINQRDYPVIMGTTVFYSVILIIMLFLVDLAYGLLDPRIKLHKKG</sequence>